<organism>
    <name type="scientific">Enterobacteria phage K3</name>
    <name type="common">Bacteriophage K3</name>
    <dbReference type="NCBI Taxonomy" id="10674"/>
    <lineage>
        <taxon>Viruses</taxon>
        <taxon>Duplodnaviria</taxon>
        <taxon>Heunggongvirae</taxon>
        <taxon>Uroviricota</taxon>
        <taxon>Caudoviricetes</taxon>
        <taxon>Straboviridae</taxon>
        <taxon>Tevenvirinae</taxon>
        <taxon>Tequatrovirus</taxon>
    </lineage>
</organism>
<accession>P10393</accession>
<reference key="1">
    <citation type="journal article" date="1987" name="J. Bacteriol.">
        <title>Lysis gene t of T-even bacteriophages: evidence that colicins and bacteriophage genes have common ancestors.</title>
        <authorList>
            <person name="Riede I."/>
        </authorList>
    </citation>
    <scope>NUCLEOTIDE SEQUENCE [GENOMIC DNA]</scope>
</reference>
<keyword id="KW-0204">Cytolysis</keyword>
<keyword id="KW-1015">Disulfide bond</keyword>
<keyword id="KW-1030">Host cell inner membrane</keyword>
<keyword id="KW-0578">Host cell lysis by virus</keyword>
<keyword id="KW-1032">Host cell membrane</keyword>
<keyword id="KW-1043">Host membrane</keyword>
<keyword id="KW-0472">Membrane</keyword>
<keyword id="KW-0735">Signal-anchor</keyword>
<keyword id="KW-0812">Transmembrane</keyword>
<keyword id="KW-1133">Transmembrane helix</keyword>
<keyword id="KW-1188">Viral release from host cell</keyword>
<dbReference type="EMBL" id="M16812">
    <property type="protein sequence ID" value="AAA88415.1"/>
    <property type="molecule type" value="Genomic_DNA"/>
</dbReference>
<dbReference type="PIR" id="A27083">
    <property type="entry name" value="YVBPK3"/>
</dbReference>
<dbReference type="SMR" id="P10393"/>
<dbReference type="GO" id="GO:0020002">
    <property type="term" value="C:host cell plasma membrane"/>
    <property type="evidence" value="ECO:0007669"/>
    <property type="project" value="UniProtKB-SubCell"/>
</dbReference>
<dbReference type="GO" id="GO:0016020">
    <property type="term" value="C:membrane"/>
    <property type="evidence" value="ECO:0007669"/>
    <property type="project" value="UniProtKB-UniRule"/>
</dbReference>
<dbReference type="GO" id="GO:0140911">
    <property type="term" value="F:pore-forming activity"/>
    <property type="evidence" value="ECO:0007669"/>
    <property type="project" value="UniProtKB-UniRule"/>
</dbReference>
<dbReference type="GO" id="GO:0044659">
    <property type="term" value="P:viral release from host cell by cytolysis"/>
    <property type="evidence" value="ECO:0007669"/>
    <property type="project" value="InterPro"/>
</dbReference>
<dbReference type="HAMAP" id="MF_04104">
    <property type="entry name" value="HOLIN_T4"/>
    <property type="match status" value="1"/>
</dbReference>
<dbReference type="InterPro" id="IPR020982">
    <property type="entry name" value="Phage_T4_GpT_holin"/>
</dbReference>
<dbReference type="Pfam" id="PF11031">
    <property type="entry name" value="Phage_holin_T"/>
    <property type="match status" value="1"/>
</dbReference>
<comment type="function">
    <text evidence="1">Accumulates harmlessly in the cytoplasmic membrane until it reaches a critical concentration that triggers the formation of micron-scale pores (holes) causing host cell membrane disruption and endolysin escape into the periplasmic space. Determines the precise timing of host cell lysis. Regulated by specific antiholins that somehow sense superinfections and then delay lysis. Participates with the endolysin and spanin proteins in the sequential events which lead to the programmed host cell lysis releasing the mature viral particles from the host cell.</text>
</comment>
<comment type="subunit">
    <text evidence="1">Homomultimer. Heterotetramer composed of 2 holin and 2 antiholin. The holin-antiholin complex binds dsDNA. Interacts (via C-terminus) with antiholin (via C-terminus); this interaction blocks the holin homomultimerization and delays host cell lysis. Interacts (via N-terminus) with the lysis inhibition accessory protein rIII; this interaction stabilizes the holin-antiholin complex thereby resulting in a robust block of the hole formation.</text>
</comment>
<comment type="subcellular location">
    <subcellularLocation>
        <location evidence="1">Host cell inner membrane</location>
        <topology evidence="1">Single-pass type II membrane protein</topology>
        <orientation evidence="1">Periplasmic side</orientation>
    </subcellularLocation>
    <text evidence="1">Classified as a class III holin.</text>
</comment>
<comment type="PTM">
    <text evidence="1">Disulfide bond is required for functionality.</text>
</comment>
<comment type="similarity">
    <text evidence="1">Belongs to the T4likevirus holin family.</text>
</comment>
<evidence type="ECO:0000255" key="1">
    <source>
        <dbReference type="HAMAP-Rule" id="MF_04104"/>
    </source>
</evidence>
<name>HOLIN_BPK3</name>
<proteinExistence type="inferred from homology"/>
<organismHost>
    <name type="scientific">Escherichia coli</name>
    <dbReference type="NCBI Taxonomy" id="562"/>
</organismHost>
<gene>
    <name type="primary">T</name>
</gene>
<protein>
    <recommendedName>
        <fullName evidence="1">Holin</fullName>
    </recommendedName>
    <alternativeName>
        <fullName>Lysis protein</fullName>
    </alternativeName>
</protein>
<feature type="chain" id="PRO_0000165067" description="Holin">
    <location>
        <begin position="1"/>
        <end position="218"/>
    </location>
</feature>
<feature type="topological domain" description="Cytoplasmic" evidence="1">
    <location>
        <begin position="1"/>
        <end position="34"/>
    </location>
</feature>
<feature type="transmembrane region" description="Helical; Signal-anchor for type II membrane protein" evidence="1">
    <location>
        <begin position="35"/>
        <end position="49"/>
    </location>
</feature>
<feature type="topological domain" description="Periplasmic" evidence="1">
    <location>
        <begin position="50"/>
        <end position="218"/>
    </location>
</feature>
<feature type="disulfide bond" evidence="1">
    <location>
        <begin position="175"/>
        <end position="207"/>
    </location>
</feature>
<sequence length="218" mass="25223">MAAPRISFSPSDILFGVLDRLFKDNATGKVLASRVAVVILLFMMAIVWYRGDSFFEYYKQSKYETYSEIIEKERNARFESVALEQLQIVHISSEADFSAVYSFRPKNLNYFVDIIAYEGKLPSTISEKSLGGYPVDKTMDEYTVHLNGRHYYSNSKFAFLPTKKPTPEINYMYSCPYFNLDNIYAGTITMYWYRNDHISNDRLESICSQAARILGRAK</sequence>